<gene>
    <name evidence="1" type="primary">rpsI</name>
    <name type="ordered locus">YpAngola_A1133</name>
</gene>
<name>RS9_YERPG</name>
<evidence type="ECO:0000255" key="1">
    <source>
        <dbReference type="HAMAP-Rule" id="MF_00532"/>
    </source>
</evidence>
<evidence type="ECO:0000305" key="2"/>
<comment type="similarity">
    <text evidence="1">Belongs to the universal ribosomal protein uS9 family.</text>
</comment>
<reference key="1">
    <citation type="journal article" date="2010" name="J. Bacteriol.">
        <title>Genome sequence of the deep-rooted Yersinia pestis strain Angola reveals new insights into the evolution and pangenome of the plague bacterium.</title>
        <authorList>
            <person name="Eppinger M."/>
            <person name="Worsham P.L."/>
            <person name="Nikolich M.P."/>
            <person name="Riley D.R."/>
            <person name="Sebastian Y."/>
            <person name="Mou S."/>
            <person name="Achtman M."/>
            <person name="Lindler L.E."/>
            <person name="Ravel J."/>
        </authorList>
    </citation>
    <scope>NUCLEOTIDE SEQUENCE [LARGE SCALE GENOMIC DNA]</scope>
    <source>
        <strain>Angola</strain>
    </source>
</reference>
<accession>A9R1R9</accession>
<dbReference type="EMBL" id="CP000901">
    <property type="protein sequence ID" value="ABX85995.1"/>
    <property type="molecule type" value="Genomic_DNA"/>
</dbReference>
<dbReference type="RefSeq" id="WP_002210133.1">
    <property type="nucleotide sequence ID" value="NZ_CP009935.1"/>
</dbReference>
<dbReference type="SMR" id="A9R1R9"/>
<dbReference type="GeneID" id="96662997"/>
<dbReference type="KEGG" id="ypg:YpAngola_A1133"/>
<dbReference type="PATRIC" id="fig|349746.12.peg.2085"/>
<dbReference type="GO" id="GO:0022627">
    <property type="term" value="C:cytosolic small ribosomal subunit"/>
    <property type="evidence" value="ECO:0007669"/>
    <property type="project" value="TreeGrafter"/>
</dbReference>
<dbReference type="GO" id="GO:0003723">
    <property type="term" value="F:RNA binding"/>
    <property type="evidence" value="ECO:0007669"/>
    <property type="project" value="TreeGrafter"/>
</dbReference>
<dbReference type="GO" id="GO:0003735">
    <property type="term" value="F:structural constituent of ribosome"/>
    <property type="evidence" value="ECO:0007669"/>
    <property type="project" value="InterPro"/>
</dbReference>
<dbReference type="GO" id="GO:0006412">
    <property type="term" value="P:translation"/>
    <property type="evidence" value="ECO:0007669"/>
    <property type="project" value="UniProtKB-UniRule"/>
</dbReference>
<dbReference type="FunFam" id="3.30.230.10:FF:000001">
    <property type="entry name" value="30S ribosomal protein S9"/>
    <property type="match status" value="1"/>
</dbReference>
<dbReference type="Gene3D" id="3.30.230.10">
    <property type="match status" value="1"/>
</dbReference>
<dbReference type="HAMAP" id="MF_00532_B">
    <property type="entry name" value="Ribosomal_uS9_B"/>
    <property type="match status" value="1"/>
</dbReference>
<dbReference type="InterPro" id="IPR020568">
    <property type="entry name" value="Ribosomal_Su5_D2-typ_SF"/>
</dbReference>
<dbReference type="InterPro" id="IPR000754">
    <property type="entry name" value="Ribosomal_uS9"/>
</dbReference>
<dbReference type="InterPro" id="IPR023035">
    <property type="entry name" value="Ribosomal_uS9_bac/plastid"/>
</dbReference>
<dbReference type="InterPro" id="IPR020574">
    <property type="entry name" value="Ribosomal_uS9_CS"/>
</dbReference>
<dbReference type="InterPro" id="IPR014721">
    <property type="entry name" value="Ribsml_uS5_D2-typ_fold_subgr"/>
</dbReference>
<dbReference type="NCBIfam" id="NF001099">
    <property type="entry name" value="PRK00132.1"/>
    <property type="match status" value="1"/>
</dbReference>
<dbReference type="PANTHER" id="PTHR21569">
    <property type="entry name" value="RIBOSOMAL PROTEIN S9"/>
    <property type="match status" value="1"/>
</dbReference>
<dbReference type="PANTHER" id="PTHR21569:SF1">
    <property type="entry name" value="SMALL RIBOSOMAL SUBUNIT PROTEIN US9M"/>
    <property type="match status" value="1"/>
</dbReference>
<dbReference type="Pfam" id="PF00380">
    <property type="entry name" value="Ribosomal_S9"/>
    <property type="match status" value="1"/>
</dbReference>
<dbReference type="SUPFAM" id="SSF54211">
    <property type="entry name" value="Ribosomal protein S5 domain 2-like"/>
    <property type="match status" value="1"/>
</dbReference>
<dbReference type="PROSITE" id="PS00360">
    <property type="entry name" value="RIBOSOMAL_S9"/>
    <property type="match status" value="1"/>
</dbReference>
<feature type="chain" id="PRO_1000128201" description="Small ribosomal subunit protein uS9">
    <location>
        <begin position="1"/>
        <end position="130"/>
    </location>
</feature>
<organism>
    <name type="scientific">Yersinia pestis bv. Antiqua (strain Angola)</name>
    <dbReference type="NCBI Taxonomy" id="349746"/>
    <lineage>
        <taxon>Bacteria</taxon>
        <taxon>Pseudomonadati</taxon>
        <taxon>Pseudomonadota</taxon>
        <taxon>Gammaproteobacteria</taxon>
        <taxon>Enterobacterales</taxon>
        <taxon>Yersiniaceae</taxon>
        <taxon>Yersinia</taxon>
    </lineage>
</organism>
<sequence>MAENQYYGTGRRKSSSARVFLKPGSGKIVINQRSLEVYFGRETARMVVNQPLELVDMVTKFDMYITVKGGGISGQAGAIRHGITRALMEYDESLRGELRKAGFVTRDAREVERKKVGLRKARRRPQFSKR</sequence>
<protein>
    <recommendedName>
        <fullName evidence="1">Small ribosomal subunit protein uS9</fullName>
    </recommendedName>
    <alternativeName>
        <fullName evidence="2">30S ribosomal protein S9</fullName>
    </alternativeName>
</protein>
<keyword id="KW-0687">Ribonucleoprotein</keyword>
<keyword id="KW-0689">Ribosomal protein</keyword>
<proteinExistence type="inferred from homology"/>